<name>GLGC_BACCN</name>
<keyword id="KW-0067">ATP-binding</keyword>
<keyword id="KW-0119">Carbohydrate metabolism</keyword>
<keyword id="KW-0320">Glycogen biosynthesis</keyword>
<keyword id="KW-0321">Glycogen metabolism</keyword>
<keyword id="KW-0547">Nucleotide-binding</keyword>
<keyword id="KW-0548">Nucleotidyltransferase</keyword>
<keyword id="KW-0808">Transferase</keyword>
<dbReference type="EC" id="2.7.7.27" evidence="1"/>
<dbReference type="EMBL" id="CP000764">
    <property type="protein sequence ID" value="ABS23708.1"/>
    <property type="molecule type" value="Genomic_DNA"/>
</dbReference>
<dbReference type="RefSeq" id="WP_012095959.1">
    <property type="nucleotide sequence ID" value="NC_009674.1"/>
</dbReference>
<dbReference type="SMR" id="A7GUA0"/>
<dbReference type="STRING" id="315749.Bcer98_3503"/>
<dbReference type="GeneID" id="33898734"/>
<dbReference type="KEGG" id="bcy:Bcer98_3503"/>
<dbReference type="eggNOG" id="COG0448">
    <property type="taxonomic scope" value="Bacteria"/>
</dbReference>
<dbReference type="HOGENOM" id="CLU_029499_14_0_9"/>
<dbReference type="OrthoDB" id="9801810at2"/>
<dbReference type="UniPathway" id="UPA00164"/>
<dbReference type="Proteomes" id="UP000002300">
    <property type="component" value="Chromosome"/>
</dbReference>
<dbReference type="GO" id="GO:0005524">
    <property type="term" value="F:ATP binding"/>
    <property type="evidence" value="ECO:0007669"/>
    <property type="project" value="UniProtKB-KW"/>
</dbReference>
<dbReference type="GO" id="GO:0008878">
    <property type="term" value="F:glucose-1-phosphate adenylyltransferase activity"/>
    <property type="evidence" value="ECO:0007669"/>
    <property type="project" value="UniProtKB-UniRule"/>
</dbReference>
<dbReference type="GO" id="GO:0005978">
    <property type="term" value="P:glycogen biosynthetic process"/>
    <property type="evidence" value="ECO:0007669"/>
    <property type="project" value="UniProtKB-UniRule"/>
</dbReference>
<dbReference type="CDD" id="cd02508">
    <property type="entry name" value="ADP_Glucose_PP"/>
    <property type="match status" value="1"/>
</dbReference>
<dbReference type="CDD" id="cd04651">
    <property type="entry name" value="LbH_G1P_AT_C"/>
    <property type="match status" value="1"/>
</dbReference>
<dbReference type="FunFam" id="3.90.550.10:FF:000083">
    <property type="entry name" value="Glucose-1-phosphate adenylyltransferase"/>
    <property type="match status" value="1"/>
</dbReference>
<dbReference type="Gene3D" id="2.160.10.10">
    <property type="entry name" value="Hexapeptide repeat proteins"/>
    <property type="match status" value="1"/>
</dbReference>
<dbReference type="Gene3D" id="3.90.550.10">
    <property type="entry name" value="Spore Coat Polysaccharide Biosynthesis Protein SpsA, Chain A"/>
    <property type="match status" value="1"/>
</dbReference>
<dbReference type="HAMAP" id="MF_00624">
    <property type="entry name" value="GlgC"/>
    <property type="match status" value="1"/>
</dbReference>
<dbReference type="InterPro" id="IPR011831">
    <property type="entry name" value="ADP-Glc_PPase"/>
</dbReference>
<dbReference type="InterPro" id="IPR005836">
    <property type="entry name" value="ADP_Glu_pyroP_CS"/>
</dbReference>
<dbReference type="InterPro" id="IPR023049">
    <property type="entry name" value="GlgC_bac"/>
</dbReference>
<dbReference type="InterPro" id="IPR056818">
    <property type="entry name" value="GlmU/GlgC-like_hexapep"/>
</dbReference>
<dbReference type="InterPro" id="IPR005835">
    <property type="entry name" value="NTP_transferase_dom"/>
</dbReference>
<dbReference type="InterPro" id="IPR029044">
    <property type="entry name" value="Nucleotide-diphossugar_trans"/>
</dbReference>
<dbReference type="InterPro" id="IPR011004">
    <property type="entry name" value="Trimer_LpxA-like_sf"/>
</dbReference>
<dbReference type="NCBIfam" id="TIGR02091">
    <property type="entry name" value="glgC"/>
    <property type="match status" value="1"/>
</dbReference>
<dbReference type="NCBIfam" id="NF003670">
    <property type="entry name" value="PRK05293.1"/>
    <property type="match status" value="1"/>
</dbReference>
<dbReference type="PANTHER" id="PTHR43523:SF2">
    <property type="entry name" value="GLUCOSE-1-PHOSPHATE ADENYLYLTRANSFERASE"/>
    <property type="match status" value="1"/>
</dbReference>
<dbReference type="PANTHER" id="PTHR43523">
    <property type="entry name" value="GLUCOSE-1-PHOSPHATE ADENYLYLTRANSFERASE-RELATED"/>
    <property type="match status" value="1"/>
</dbReference>
<dbReference type="Pfam" id="PF24894">
    <property type="entry name" value="Hexapep_GlmU"/>
    <property type="match status" value="1"/>
</dbReference>
<dbReference type="Pfam" id="PF00483">
    <property type="entry name" value="NTP_transferase"/>
    <property type="match status" value="1"/>
</dbReference>
<dbReference type="SUPFAM" id="SSF53448">
    <property type="entry name" value="Nucleotide-diphospho-sugar transferases"/>
    <property type="match status" value="1"/>
</dbReference>
<dbReference type="SUPFAM" id="SSF51161">
    <property type="entry name" value="Trimeric LpxA-like enzymes"/>
    <property type="match status" value="1"/>
</dbReference>
<dbReference type="PROSITE" id="PS00808">
    <property type="entry name" value="ADP_GLC_PYROPHOSPH_1"/>
    <property type="match status" value="1"/>
</dbReference>
<dbReference type="PROSITE" id="PS00809">
    <property type="entry name" value="ADP_GLC_PYROPHOSPH_2"/>
    <property type="match status" value="1"/>
</dbReference>
<evidence type="ECO:0000255" key="1">
    <source>
        <dbReference type="HAMAP-Rule" id="MF_00624"/>
    </source>
</evidence>
<protein>
    <recommendedName>
        <fullName evidence="1">Glucose-1-phosphate adenylyltransferase</fullName>
        <ecNumber evidence="1">2.7.7.27</ecNumber>
    </recommendedName>
    <alternativeName>
        <fullName evidence="1">ADP-glucose pyrophosphorylase</fullName>
        <shortName evidence="1">ADPGlc PPase</shortName>
    </alternativeName>
    <alternativeName>
        <fullName evidence="1">ADP-glucose synthase</fullName>
    </alternativeName>
</protein>
<proteinExistence type="inferred from homology"/>
<organism>
    <name type="scientific">Bacillus cytotoxicus (strain DSM 22905 / CIP 110041 / 391-98 / NVH 391-98)</name>
    <dbReference type="NCBI Taxonomy" id="315749"/>
    <lineage>
        <taxon>Bacteria</taxon>
        <taxon>Bacillati</taxon>
        <taxon>Bacillota</taxon>
        <taxon>Bacilli</taxon>
        <taxon>Bacillales</taxon>
        <taxon>Bacillaceae</taxon>
        <taxon>Bacillus</taxon>
        <taxon>Bacillus cereus group</taxon>
    </lineage>
</organism>
<comment type="function">
    <text evidence="1">Involved in the biosynthesis of ADP-glucose, a building block required for the elongation reactions to produce glycogen. Catalyzes the reaction between ATP and alpha-D-glucose 1-phosphate (G1P) to produce pyrophosphate and ADP-Glc.</text>
</comment>
<comment type="catalytic activity">
    <reaction evidence="1">
        <text>alpha-D-glucose 1-phosphate + ATP + H(+) = ADP-alpha-D-glucose + diphosphate</text>
        <dbReference type="Rhea" id="RHEA:12120"/>
        <dbReference type="ChEBI" id="CHEBI:15378"/>
        <dbReference type="ChEBI" id="CHEBI:30616"/>
        <dbReference type="ChEBI" id="CHEBI:33019"/>
        <dbReference type="ChEBI" id="CHEBI:57498"/>
        <dbReference type="ChEBI" id="CHEBI:58601"/>
        <dbReference type="EC" id="2.7.7.27"/>
    </reaction>
</comment>
<comment type="pathway">
    <text evidence="1">Glycan biosynthesis; glycogen biosynthesis.</text>
</comment>
<comment type="subunit">
    <text evidence="1">Homotetramer.</text>
</comment>
<comment type="similarity">
    <text evidence="1">Belongs to the bacterial/plant glucose-1-phosphate adenylyltransferase family.</text>
</comment>
<accession>A7GUA0</accession>
<sequence>MVKKQNCVAMLLAGGKGSRLSALTKNLAKPAVPFGGKYRIIDFTLSNCSNSGIETVGILTQYQPLELHNYIGIGNAWDLDRVNGGVTVLPPYAEASGVKWYTGTASAIYQNMNFLRQYNPEYVLILSGDHIYKMDYSKMLDYHIAKEADVSISVIEVPWDEASRFGIMNTNEEMEIVEFEEKPQFPKSNLASMGIYIFNWAILKEYLEMDARNPDSSNDFGKDVLPLLLDEGKKLIAYPFQGYWKDVGTVKSLWEANMDLLRDESLLQLNDHEWRVYSVNPNEPPQFISETAKVEESLINEGCIIEGEVRHSVLFQGVTVDEGSKVIDSVVMPGAHIGKNVVIEKAIVGPGMVIEDGEVIRSEKNTDDVVLIAEGI</sequence>
<feature type="chain" id="PRO_1000082592" description="Glucose-1-phosphate adenylyltransferase">
    <location>
        <begin position="1"/>
        <end position="376"/>
    </location>
</feature>
<feature type="binding site" evidence="1">
    <location>
        <position position="101"/>
    </location>
    <ligand>
        <name>alpha-D-glucose 1-phosphate</name>
        <dbReference type="ChEBI" id="CHEBI:58601"/>
    </ligand>
</feature>
<feature type="binding site" evidence="1">
    <location>
        <position position="166"/>
    </location>
    <ligand>
        <name>alpha-D-glucose 1-phosphate</name>
        <dbReference type="ChEBI" id="CHEBI:58601"/>
    </ligand>
</feature>
<feature type="binding site" evidence="1">
    <location>
        <begin position="181"/>
        <end position="182"/>
    </location>
    <ligand>
        <name>alpha-D-glucose 1-phosphate</name>
        <dbReference type="ChEBI" id="CHEBI:58601"/>
    </ligand>
</feature>
<feature type="binding site" evidence="1">
    <location>
        <position position="192"/>
    </location>
    <ligand>
        <name>alpha-D-glucose 1-phosphate</name>
        <dbReference type="ChEBI" id="CHEBI:58601"/>
    </ligand>
</feature>
<gene>
    <name evidence="1" type="primary">glgC</name>
    <name type="ordered locus">Bcer98_3503</name>
</gene>
<reference key="1">
    <citation type="journal article" date="2008" name="Chem. Biol. Interact.">
        <title>Extending the Bacillus cereus group genomics to putative food-borne pathogens of different toxicity.</title>
        <authorList>
            <person name="Lapidus A."/>
            <person name="Goltsman E."/>
            <person name="Auger S."/>
            <person name="Galleron N."/>
            <person name="Segurens B."/>
            <person name="Dossat C."/>
            <person name="Land M.L."/>
            <person name="Broussolle V."/>
            <person name="Brillard J."/>
            <person name="Guinebretiere M.-H."/>
            <person name="Sanchis V."/>
            <person name="Nguen-the C."/>
            <person name="Lereclus D."/>
            <person name="Richardson P."/>
            <person name="Wincker P."/>
            <person name="Weissenbach J."/>
            <person name="Ehrlich S.D."/>
            <person name="Sorokin A."/>
        </authorList>
    </citation>
    <scope>NUCLEOTIDE SEQUENCE [LARGE SCALE GENOMIC DNA]</scope>
    <source>
        <strain>DSM 22905 / CIP 110041 / 391-98 / NVH 391-98</strain>
    </source>
</reference>